<feature type="chain" id="PRO_1000054227" description="GTP 3',8-cyclase">
    <location>
        <begin position="1"/>
        <end position="349"/>
    </location>
</feature>
<feature type="domain" description="Radical SAM core" evidence="2">
    <location>
        <begin position="24"/>
        <end position="249"/>
    </location>
</feature>
<feature type="binding site" evidence="1">
    <location>
        <position position="33"/>
    </location>
    <ligand>
        <name>GTP</name>
        <dbReference type="ChEBI" id="CHEBI:37565"/>
    </ligand>
</feature>
<feature type="binding site" evidence="1">
    <location>
        <position position="40"/>
    </location>
    <ligand>
        <name>[4Fe-4S] cluster</name>
        <dbReference type="ChEBI" id="CHEBI:49883"/>
        <label>1</label>
        <note>4Fe-4S-S-AdoMet</note>
    </ligand>
</feature>
<feature type="binding site" evidence="1">
    <location>
        <position position="44"/>
    </location>
    <ligand>
        <name>[4Fe-4S] cluster</name>
        <dbReference type="ChEBI" id="CHEBI:49883"/>
        <label>1</label>
        <note>4Fe-4S-S-AdoMet</note>
    </ligand>
</feature>
<feature type="binding site" evidence="1">
    <location>
        <position position="46"/>
    </location>
    <ligand>
        <name>S-adenosyl-L-methionine</name>
        <dbReference type="ChEBI" id="CHEBI:59789"/>
    </ligand>
</feature>
<feature type="binding site" evidence="1">
    <location>
        <position position="47"/>
    </location>
    <ligand>
        <name>[4Fe-4S] cluster</name>
        <dbReference type="ChEBI" id="CHEBI:49883"/>
        <label>1</label>
        <note>4Fe-4S-S-AdoMet</note>
    </ligand>
</feature>
<feature type="binding site" evidence="1">
    <location>
        <position position="82"/>
    </location>
    <ligand>
        <name>GTP</name>
        <dbReference type="ChEBI" id="CHEBI:37565"/>
    </ligand>
</feature>
<feature type="binding site" evidence="1">
    <location>
        <position position="86"/>
    </location>
    <ligand>
        <name>S-adenosyl-L-methionine</name>
        <dbReference type="ChEBI" id="CHEBI:59789"/>
    </ligand>
</feature>
<feature type="binding site" evidence="1">
    <location>
        <position position="116"/>
    </location>
    <ligand>
        <name>GTP</name>
        <dbReference type="ChEBI" id="CHEBI:37565"/>
    </ligand>
</feature>
<feature type="binding site" evidence="1">
    <location>
        <position position="140"/>
    </location>
    <ligand>
        <name>S-adenosyl-L-methionine</name>
        <dbReference type="ChEBI" id="CHEBI:59789"/>
    </ligand>
</feature>
<feature type="binding site" evidence="1">
    <location>
        <position position="176"/>
    </location>
    <ligand>
        <name>GTP</name>
        <dbReference type="ChEBI" id="CHEBI:37565"/>
    </ligand>
</feature>
<feature type="binding site" evidence="1">
    <location>
        <position position="210"/>
    </location>
    <ligand>
        <name>S-adenosyl-L-methionine</name>
        <dbReference type="ChEBI" id="CHEBI:59789"/>
    </ligand>
</feature>
<feature type="binding site" evidence="1">
    <location>
        <position position="273"/>
    </location>
    <ligand>
        <name>[4Fe-4S] cluster</name>
        <dbReference type="ChEBI" id="CHEBI:49883"/>
        <label>2</label>
        <note>4Fe-4S-substrate</note>
    </ligand>
</feature>
<feature type="binding site" evidence="1">
    <location>
        <position position="276"/>
    </location>
    <ligand>
        <name>[4Fe-4S] cluster</name>
        <dbReference type="ChEBI" id="CHEBI:49883"/>
        <label>2</label>
        <note>4Fe-4S-substrate</note>
    </ligand>
</feature>
<feature type="binding site" evidence="1">
    <location>
        <begin position="278"/>
        <end position="280"/>
    </location>
    <ligand>
        <name>GTP</name>
        <dbReference type="ChEBI" id="CHEBI:37565"/>
    </ligand>
</feature>
<feature type="binding site" evidence="1">
    <location>
        <position position="290"/>
    </location>
    <ligand>
        <name>[4Fe-4S] cluster</name>
        <dbReference type="ChEBI" id="CHEBI:49883"/>
        <label>2</label>
        <note>4Fe-4S-substrate</note>
    </ligand>
</feature>
<accession>A6U9U3</accession>
<evidence type="ECO:0000255" key="1">
    <source>
        <dbReference type="HAMAP-Rule" id="MF_01225"/>
    </source>
</evidence>
<evidence type="ECO:0000255" key="2">
    <source>
        <dbReference type="PROSITE-ProRule" id="PRU01266"/>
    </source>
</evidence>
<keyword id="KW-0004">4Fe-4S</keyword>
<keyword id="KW-0342">GTP-binding</keyword>
<keyword id="KW-0408">Iron</keyword>
<keyword id="KW-0411">Iron-sulfur</keyword>
<keyword id="KW-0456">Lyase</keyword>
<keyword id="KW-0479">Metal-binding</keyword>
<keyword id="KW-0501">Molybdenum cofactor biosynthesis</keyword>
<keyword id="KW-0547">Nucleotide-binding</keyword>
<keyword id="KW-0949">S-adenosyl-L-methionine</keyword>
<dbReference type="EC" id="4.1.99.22" evidence="1"/>
<dbReference type="EMBL" id="CP000738">
    <property type="protein sequence ID" value="ABR60423.1"/>
    <property type="molecule type" value="Genomic_DNA"/>
</dbReference>
<dbReference type="RefSeq" id="WP_011975731.1">
    <property type="nucleotide sequence ID" value="NC_009636.1"/>
</dbReference>
<dbReference type="RefSeq" id="YP_001327258.1">
    <property type="nucleotide sequence ID" value="NC_009636.1"/>
</dbReference>
<dbReference type="SMR" id="A6U9U3"/>
<dbReference type="STRING" id="366394.Smed_1582"/>
<dbReference type="KEGG" id="smd:Smed_1582"/>
<dbReference type="PATRIC" id="fig|366394.8.peg.4720"/>
<dbReference type="eggNOG" id="COG2896">
    <property type="taxonomic scope" value="Bacteria"/>
</dbReference>
<dbReference type="HOGENOM" id="CLU_009273_0_1_5"/>
<dbReference type="OrthoDB" id="9763993at2"/>
<dbReference type="UniPathway" id="UPA00344"/>
<dbReference type="Proteomes" id="UP000001108">
    <property type="component" value="Chromosome"/>
</dbReference>
<dbReference type="GO" id="GO:0051539">
    <property type="term" value="F:4 iron, 4 sulfur cluster binding"/>
    <property type="evidence" value="ECO:0007669"/>
    <property type="project" value="UniProtKB-UniRule"/>
</dbReference>
<dbReference type="GO" id="GO:0061799">
    <property type="term" value="F:cyclic pyranopterin monophosphate synthase activity"/>
    <property type="evidence" value="ECO:0007669"/>
    <property type="project" value="TreeGrafter"/>
</dbReference>
<dbReference type="GO" id="GO:0061798">
    <property type="term" value="F:GTP 3',8'-cyclase activity"/>
    <property type="evidence" value="ECO:0007669"/>
    <property type="project" value="UniProtKB-UniRule"/>
</dbReference>
<dbReference type="GO" id="GO:0005525">
    <property type="term" value="F:GTP binding"/>
    <property type="evidence" value="ECO:0007669"/>
    <property type="project" value="UniProtKB-UniRule"/>
</dbReference>
<dbReference type="GO" id="GO:0046872">
    <property type="term" value="F:metal ion binding"/>
    <property type="evidence" value="ECO:0007669"/>
    <property type="project" value="UniProtKB-KW"/>
</dbReference>
<dbReference type="GO" id="GO:1904047">
    <property type="term" value="F:S-adenosyl-L-methionine binding"/>
    <property type="evidence" value="ECO:0007669"/>
    <property type="project" value="UniProtKB-UniRule"/>
</dbReference>
<dbReference type="GO" id="GO:0006777">
    <property type="term" value="P:Mo-molybdopterin cofactor biosynthetic process"/>
    <property type="evidence" value="ECO:0007669"/>
    <property type="project" value="UniProtKB-UniRule"/>
</dbReference>
<dbReference type="CDD" id="cd01335">
    <property type="entry name" value="Radical_SAM"/>
    <property type="match status" value="1"/>
</dbReference>
<dbReference type="CDD" id="cd21117">
    <property type="entry name" value="Twitch_MoaA"/>
    <property type="match status" value="1"/>
</dbReference>
<dbReference type="Gene3D" id="3.20.20.70">
    <property type="entry name" value="Aldolase class I"/>
    <property type="match status" value="1"/>
</dbReference>
<dbReference type="HAMAP" id="MF_01225_B">
    <property type="entry name" value="MoaA_B"/>
    <property type="match status" value="1"/>
</dbReference>
<dbReference type="InterPro" id="IPR013785">
    <property type="entry name" value="Aldolase_TIM"/>
</dbReference>
<dbReference type="InterPro" id="IPR006638">
    <property type="entry name" value="Elp3/MiaA/NifB-like_rSAM"/>
</dbReference>
<dbReference type="InterPro" id="IPR013483">
    <property type="entry name" value="MoaA"/>
</dbReference>
<dbReference type="InterPro" id="IPR000385">
    <property type="entry name" value="MoaA_NifB_PqqE_Fe-S-bd_CS"/>
</dbReference>
<dbReference type="InterPro" id="IPR010505">
    <property type="entry name" value="MoaA_twitch"/>
</dbReference>
<dbReference type="InterPro" id="IPR050105">
    <property type="entry name" value="MoCo_biosynth_MoaA/MoaC"/>
</dbReference>
<dbReference type="InterPro" id="IPR007197">
    <property type="entry name" value="rSAM"/>
</dbReference>
<dbReference type="NCBIfam" id="TIGR02666">
    <property type="entry name" value="moaA"/>
    <property type="match status" value="1"/>
</dbReference>
<dbReference type="PANTHER" id="PTHR22960:SF0">
    <property type="entry name" value="MOLYBDENUM COFACTOR BIOSYNTHESIS PROTEIN 1"/>
    <property type="match status" value="1"/>
</dbReference>
<dbReference type="PANTHER" id="PTHR22960">
    <property type="entry name" value="MOLYBDOPTERIN COFACTOR SYNTHESIS PROTEIN A"/>
    <property type="match status" value="1"/>
</dbReference>
<dbReference type="Pfam" id="PF13353">
    <property type="entry name" value="Fer4_12"/>
    <property type="match status" value="1"/>
</dbReference>
<dbReference type="Pfam" id="PF06463">
    <property type="entry name" value="Mob_synth_C"/>
    <property type="match status" value="1"/>
</dbReference>
<dbReference type="Pfam" id="PF04055">
    <property type="entry name" value="Radical_SAM"/>
    <property type="match status" value="1"/>
</dbReference>
<dbReference type="SFLD" id="SFLDG01383">
    <property type="entry name" value="cyclic_pyranopterin_phosphate"/>
    <property type="match status" value="1"/>
</dbReference>
<dbReference type="SFLD" id="SFLDG01072">
    <property type="entry name" value="dehydrogenase_like"/>
    <property type="match status" value="1"/>
</dbReference>
<dbReference type="SMART" id="SM00729">
    <property type="entry name" value="Elp3"/>
    <property type="match status" value="1"/>
</dbReference>
<dbReference type="SUPFAM" id="SSF102114">
    <property type="entry name" value="Radical SAM enzymes"/>
    <property type="match status" value="1"/>
</dbReference>
<dbReference type="PROSITE" id="PS01305">
    <property type="entry name" value="MOAA_NIFB_PQQE"/>
    <property type="match status" value="1"/>
</dbReference>
<dbReference type="PROSITE" id="PS51918">
    <property type="entry name" value="RADICAL_SAM"/>
    <property type="match status" value="1"/>
</dbReference>
<proteinExistence type="inferred from homology"/>
<organism>
    <name type="scientific">Sinorhizobium medicae (strain WSM419)</name>
    <name type="common">Ensifer medicae</name>
    <dbReference type="NCBI Taxonomy" id="366394"/>
    <lineage>
        <taxon>Bacteria</taxon>
        <taxon>Pseudomonadati</taxon>
        <taxon>Pseudomonadota</taxon>
        <taxon>Alphaproteobacteria</taxon>
        <taxon>Hyphomicrobiales</taxon>
        <taxon>Rhizobiaceae</taxon>
        <taxon>Sinorhizobium/Ensifer group</taxon>
        <taxon>Sinorhizobium</taxon>
    </lineage>
</organism>
<protein>
    <recommendedName>
        <fullName evidence="1">GTP 3',8-cyclase</fullName>
        <ecNumber evidence="1">4.1.99.22</ecNumber>
    </recommendedName>
    <alternativeName>
        <fullName evidence="1">Molybdenum cofactor biosynthesis protein A</fullName>
    </alternativeName>
</protein>
<gene>
    <name evidence="1" type="primary">moaA</name>
    <name type="ordered locus">Smed_1582</name>
</gene>
<reference key="1">
    <citation type="submission" date="2007-06" db="EMBL/GenBank/DDBJ databases">
        <title>Complete sequence of Sinorhizobium medicae WSM419 chromosome.</title>
        <authorList>
            <consortium name="US DOE Joint Genome Institute"/>
            <person name="Copeland A."/>
            <person name="Lucas S."/>
            <person name="Lapidus A."/>
            <person name="Barry K."/>
            <person name="Glavina del Rio T."/>
            <person name="Dalin E."/>
            <person name="Tice H."/>
            <person name="Pitluck S."/>
            <person name="Chain P."/>
            <person name="Malfatti S."/>
            <person name="Shin M."/>
            <person name="Vergez L."/>
            <person name="Schmutz J."/>
            <person name="Larimer F."/>
            <person name="Land M."/>
            <person name="Hauser L."/>
            <person name="Kyrpides N."/>
            <person name="Mikhailova N."/>
            <person name="Reeve W.G."/>
            <person name="Richardson P."/>
        </authorList>
    </citation>
    <scope>NUCLEOTIDE SEQUENCE [LARGE SCALE GENOMIC DNA]</scope>
    <source>
        <strain>WSM419</strain>
    </source>
</reference>
<sequence>MNTAAIDQTNARSLDSTTASMVDPFGRAVTYLRVSVTDRCDFRCTYCMAEHMTFLPKKDLLTLEELHRLCSAFIAKGVRKLRLTGGEPLVRKNIMFLIRELGKEIEAGRLDELTLTTNGSQLSKFAAELVDCGVRRINVSLDTLDPDKFRQITRWGELTKVLEGIDAALAAGLKVKINAVALKDFNDAEIPELMRWAHGRGMDLTLIETMPMGEVDEDRTDHYLPLSEMRKRLEADFTLKDMSYRTGGPARYVDVLETGGRLGLITPMTHNFCESCNRVRLTCTGTLYMCLGQNDAADLRSALRATEDDAYLAQVIDDAISRKPKGHDFIIDREHNRPAVARHMSVTGG</sequence>
<name>MOAA_SINMW</name>
<comment type="function">
    <text evidence="1">Catalyzes the cyclization of GTP to (8S)-3',8-cyclo-7,8-dihydroguanosine 5'-triphosphate.</text>
</comment>
<comment type="catalytic activity">
    <reaction evidence="1">
        <text>GTP + AH2 + S-adenosyl-L-methionine = (8S)-3',8-cyclo-7,8-dihydroguanosine 5'-triphosphate + 5'-deoxyadenosine + L-methionine + A + H(+)</text>
        <dbReference type="Rhea" id="RHEA:49576"/>
        <dbReference type="ChEBI" id="CHEBI:13193"/>
        <dbReference type="ChEBI" id="CHEBI:15378"/>
        <dbReference type="ChEBI" id="CHEBI:17319"/>
        <dbReference type="ChEBI" id="CHEBI:17499"/>
        <dbReference type="ChEBI" id="CHEBI:37565"/>
        <dbReference type="ChEBI" id="CHEBI:57844"/>
        <dbReference type="ChEBI" id="CHEBI:59789"/>
        <dbReference type="ChEBI" id="CHEBI:131766"/>
        <dbReference type="EC" id="4.1.99.22"/>
    </reaction>
</comment>
<comment type="cofactor">
    <cofactor evidence="1">
        <name>[4Fe-4S] cluster</name>
        <dbReference type="ChEBI" id="CHEBI:49883"/>
    </cofactor>
    <text evidence="1">Binds 2 [4Fe-4S] clusters. Binds 1 [4Fe-4S] cluster coordinated with 3 cysteines and an exchangeable S-adenosyl-L-methionine and 1 [4Fe-4S] cluster coordinated with 3 cysteines and the GTP-derived substrate.</text>
</comment>
<comment type="pathway">
    <text evidence="1">Cofactor biosynthesis; molybdopterin biosynthesis.</text>
</comment>
<comment type="subunit">
    <text evidence="1">Monomer and homodimer.</text>
</comment>
<comment type="similarity">
    <text evidence="1">Belongs to the radical SAM superfamily. MoaA family.</text>
</comment>